<reference key="1">
    <citation type="journal article" date="2005" name="Nature">
        <title>The genome of the social amoeba Dictyostelium discoideum.</title>
        <authorList>
            <person name="Eichinger L."/>
            <person name="Pachebat J.A."/>
            <person name="Gloeckner G."/>
            <person name="Rajandream M.A."/>
            <person name="Sucgang R."/>
            <person name="Berriman M."/>
            <person name="Song J."/>
            <person name="Olsen R."/>
            <person name="Szafranski K."/>
            <person name="Xu Q."/>
            <person name="Tunggal B."/>
            <person name="Kummerfeld S."/>
            <person name="Madera M."/>
            <person name="Konfortov B.A."/>
            <person name="Rivero F."/>
            <person name="Bankier A.T."/>
            <person name="Lehmann R."/>
            <person name="Hamlin N."/>
            <person name="Davies R."/>
            <person name="Gaudet P."/>
            <person name="Fey P."/>
            <person name="Pilcher K."/>
            <person name="Chen G."/>
            <person name="Saunders D."/>
            <person name="Sodergren E.J."/>
            <person name="Davis P."/>
            <person name="Kerhornou A."/>
            <person name="Nie X."/>
            <person name="Hall N."/>
            <person name="Anjard C."/>
            <person name="Hemphill L."/>
            <person name="Bason N."/>
            <person name="Farbrother P."/>
            <person name="Desany B."/>
            <person name="Just E."/>
            <person name="Morio T."/>
            <person name="Rost R."/>
            <person name="Churcher C.M."/>
            <person name="Cooper J."/>
            <person name="Haydock S."/>
            <person name="van Driessche N."/>
            <person name="Cronin A."/>
            <person name="Goodhead I."/>
            <person name="Muzny D.M."/>
            <person name="Mourier T."/>
            <person name="Pain A."/>
            <person name="Lu M."/>
            <person name="Harper D."/>
            <person name="Lindsay R."/>
            <person name="Hauser H."/>
            <person name="James K.D."/>
            <person name="Quiles M."/>
            <person name="Madan Babu M."/>
            <person name="Saito T."/>
            <person name="Buchrieser C."/>
            <person name="Wardroper A."/>
            <person name="Felder M."/>
            <person name="Thangavelu M."/>
            <person name="Johnson D."/>
            <person name="Knights A."/>
            <person name="Loulseged H."/>
            <person name="Mungall K.L."/>
            <person name="Oliver K."/>
            <person name="Price C."/>
            <person name="Quail M.A."/>
            <person name="Urushihara H."/>
            <person name="Hernandez J."/>
            <person name="Rabbinowitsch E."/>
            <person name="Steffen D."/>
            <person name="Sanders M."/>
            <person name="Ma J."/>
            <person name="Kohara Y."/>
            <person name="Sharp S."/>
            <person name="Simmonds M.N."/>
            <person name="Spiegler S."/>
            <person name="Tivey A."/>
            <person name="Sugano S."/>
            <person name="White B."/>
            <person name="Walker D."/>
            <person name="Woodward J.R."/>
            <person name="Winckler T."/>
            <person name="Tanaka Y."/>
            <person name="Shaulsky G."/>
            <person name="Schleicher M."/>
            <person name="Weinstock G.M."/>
            <person name="Rosenthal A."/>
            <person name="Cox E.C."/>
            <person name="Chisholm R.L."/>
            <person name="Gibbs R.A."/>
            <person name="Loomis W.F."/>
            <person name="Platzer M."/>
            <person name="Kay R.R."/>
            <person name="Williams J.G."/>
            <person name="Dear P.H."/>
            <person name="Noegel A.A."/>
            <person name="Barrell B.G."/>
            <person name="Kuspa A."/>
        </authorList>
    </citation>
    <scope>NUCLEOTIDE SEQUENCE [LARGE SCALE GENOMIC DNA]</scope>
    <source>
        <strain>AX4</strain>
    </source>
</reference>
<name>Y2105_DICDI</name>
<accession>Q54T01</accession>
<feature type="chain" id="PRO_0000369246" description="Probable protein phosphatase DDB_G0282105">
    <location>
        <begin position="1"/>
        <end position="958"/>
    </location>
</feature>
<feature type="transmembrane region" description="Helical" evidence="2">
    <location>
        <begin position="2"/>
        <end position="22"/>
    </location>
</feature>
<feature type="transmembrane region" description="Helical" evidence="2">
    <location>
        <begin position="26"/>
        <end position="46"/>
    </location>
</feature>
<feature type="domain" description="PPM-type phosphatase" evidence="3">
    <location>
        <begin position="675"/>
        <end position="958"/>
    </location>
</feature>
<feature type="region of interest" description="Disordered" evidence="4">
    <location>
        <begin position="312"/>
        <end position="361"/>
    </location>
</feature>
<feature type="region of interest" description="Disordered" evidence="4">
    <location>
        <begin position="380"/>
        <end position="421"/>
    </location>
</feature>
<feature type="region of interest" description="Disordered" evidence="4">
    <location>
        <begin position="445"/>
        <end position="475"/>
    </location>
</feature>
<feature type="region of interest" description="Disordered" evidence="4">
    <location>
        <begin position="491"/>
        <end position="525"/>
    </location>
</feature>
<feature type="region of interest" description="Disordered" evidence="4">
    <location>
        <begin position="619"/>
        <end position="659"/>
    </location>
</feature>
<feature type="coiled-coil region" evidence="2">
    <location>
        <begin position="142"/>
        <end position="330"/>
    </location>
</feature>
<feature type="coiled-coil region" evidence="2">
    <location>
        <begin position="613"/>
        <end position="666"/>
    </location>
</feature>
<feature type="compositionally biased region" description="Basic and acidic residues" evidence="4">
    <location>
        <begin position="312"/>
        <end position="328"/>
    </location>
</feature>
<feature type="compositionally biased region" description="Low complexity" evidence="4">
    <location>
        <begin position="329"/>
        <end position="361"/>
    </location>
</feature>
<feature type="compositionally biased region" description="Low complexity" evidence="4">
    <location>
        <begin position="390"/>
        <end position="401"/>
    </location>
</feature>
<feature type="compositionally biased region" description="Low complexity" evidence="4">
    <location>
        <begin position="452"/>
        <end position="475"/>
    </location>
</feature>
<feature type="compositionally biased region" description="Low complexity" evidence="4">
    <location>
        <begin position="491"/>
        <end position="515"/>
    </location>
</feature>
<feature type="compositionally biased region" description="Low complexity" evidence="4">
    <location>
        <begin position="619"/>
        <end position="655"/>
    </location>
</feature>
<feature type="binding site" evidence="1">
    <location>
        <position position="722"/>
    </location>
    <ligand>
        <name>Mn(2+)</name>
        <dbReference type="ChEBI" id="CHEBI:29035"/>
        <label>1</label>
    </ligand>
</feature>
<feature type="binding site" evidence="1">
    <location>
        <position position="722"/>
    </location>
    <ligand>
        <name>Mn(2+)</name>
        <dbReference type="ChEBI" id="CHEBI:29035"/>
        <label>2</label>
    </ligand>
</feature>
<feature type="binding site" evidence="1">
    <location>
        <position position="723"/>
    </location>
    <ligand>
        <name>Mn(2+)</name>
        <dbReference type="ChEBI" id="CHEBI:29035"/>
        <label>1</label>
    </ligand>
</feature>
<feature type="binding site" evidence="1">
    <location>
        <position position="905"/>
    </location>
    <ligand>
        <name>Mn(2+)</name>
        <dbReference type="ChEBI" id="CHEBI:29035"/>
        <label>2</label>
    </ligand>
</feature>
<feature type="binding site" evidence="1">
    <location>
        <position position="949"/>
    </location>
    <ligand>
        <name>Mn(2+)</name>
        <dbReference type="ChEBI" id="CHEBI:29035"/>
        <label>2</label>
    </ligand>
</feature>
<keyword id="KW-0175">Coiled coil</keyword>
<keyword id="KW-0378">Hydrolase</keyword>
<keyword id="KW-0460">Magnesium</keyword>
<keyword id="KW-0464">Manganese</keyword>
<keyword id="KW-0472">Membrane</keyword>
<keyword id="KW-0479">Metal-binding</keyword>
<keyword id="KW-0904">Protein phosphatase</keyword>
<keyword id="KW-1185">Reference proteome</keyword>
<keyword id="KW-0812">Transmembrane</keyword>
<keyword id="KW-1133">Transmembrane helix</keyword>
<dbReference type="EC" id="3.1.3.16"/>
<dbReference type="EMBL" id="AAFI02000045">
    <property type="protein sequence ID" value="EAL66378.1"/>
    <property type="molecule type" value="Genomic_DNA"/>
</dbReference>
<dbReference type="RefSeq" id="XP_640354.1">
    <property type="nucleotide sequence ID" value="XM_635262.1"/>
</dbReference>
<dbReference type="SMR" id="Q54T01"/>
<dbReference type="FunCoup" id="Q54T01">
    <property type="interactions" value="744"/>
</dbReference>
<dbReference type="STRING" id="44689.Q54T01"/>
<dbReference type="PaxDb" id="44689-DDB0235260"/>
<dbReference type="EnsemblProtists" id="EAL66378">
    <property type="protein sequence ID" value="EAL66378"/>
    <property type="gene ID" value="DDB_G0282105"/>
</dbReference>
<dbReference type="GeneID" id="8623409"/>
<dbReference type="KEGG" id="ddi:DDB_G0282105"/>
<dbReference type="dictyBase" id="DDB_G0282105"/>
<dbReference type="VEuPathDB" id="AmoebaDB:DDB_G0282105"/>
<dbReference type="eggNOG" id="KOG0698">
    <property type="taxonomic scope" value="Eukaryota"/>
</dbReference>
<dbReference type="HOGENOM" id="CLU_308254_0_0_1"/>
<dbReference type="InParanoid" id="Q54T01"/>
<dbReference type="OMA" id="QNIGMIS"/>
<dbReference type="PRO" id="PR:Q54T01"/>
<dbReference type="Proteomes" id="UP000002195">
    <property type="component" value="Chromosome 3"/>
</dbReference>
<dbReference type="GO" id="GO:0016020">
    <property type="term" value="C:membrane"/>
    <property type="evidence" value="ECO:0007669"/>
    <property type="project" value="UniProtKB-SubCell"/>
</dbReference>
<dbReference type="GO" id="GO:0046872">
    <property type="term" value="F:metal ion binding"/>
    <property type="evidence" value="ECO:0007669"/>
    <property type="project" value="UniProtKB-KW"/>
</dbReference>
<dbReference type="GO" id="GO:0004722">
    <property type="term" value="F:protein serine/threonine phosphatase activity"/>
    <property type="evidence" value="ECO:0007669"/>
    <property type="project" value="UniProtKB-EC"/>
</dbReference>
<dbReference type="GO" id="GO:0007165">
    <property type="term" value="P:signal transduction"/>
    <property type="evidence" value="ECO:0000318"/>
    <property type="project" value="GO_Central"/>
</dbReference>
<dbReference type="CDD" id="cd00143">
    <property type="entry name" value="PP2Cc"/>
    <property type="match status" value="1"/>
</dbReference>
<dbReference type="Gene3D" id="3.60.40.10">
    <property type="entry name" value="PPM-type phosphatase domain"/>
    <property type="match status" value="1"/>
</dbReference>
<dbReference type="InterPro" id="IPR015655">
    <property type="entry name" value="PP2C"/>
</dbReference>
<dbReference type="InterPro" id="IPR000222">
    <property type="entry name" value="PP2C_BS"/>
</dbReference>
<dbReference type="InterPro" id="IPR036457">
    <property type="entry name" value="PPM-type-like_dom_sf"/>
</dbReference>
<dbReference type="InterPro" id="IPR001932">
    <property type="entry name" value="PPM-type_phosphatase-like_dom"/>
</dbReference>
<dbReference type="PANTHER" id="PTHR47992">
    <property type="entry name" value="PROTEIN PHOSPHATASE"/>
    <property type="match status" value="1"/>
</dbReference>
<dbReference type="Pfam" id="PF00481">
    <property type="entry name" value="PP2C"/>
    <property type="match status" value="1"/>
</dbReference>
<dbReference type="SMART" id="SM00332">
    <property type="entry name" value="PP2Cc"/>
    <property type="match status" value="1"/>
</dbReference>
<dbReference type="SUPFAM" id="SSF81606">
    <property type="entry name" value="PP2C-like"/>
    <property type="match status" value="1"/>
</dbReference>
<dbReference type="PROSITE" id="PS01032">
    <property type="entry name" value="PPM_1"/>
    <property type="match status" value="1"/>
</dbReference>
<dbReference type="PROSITE" id="PS51746">
    <property type="entry name" value="PPM_2"/>
    <property type="match status" value="1"/>
</dbReference>
<comment type="catalytic activity">
    <reaction>
        <text>O-phospho-L-seryl-[protein] + H2O = L-seryl-[protein] + phosphate</text>
        <dbReference type="Rhea" id="RHEA:20629"/>
        <dbReference type="Rhea" id="RHEA-COMP:9863"/>
        <dbReference type="Rhea" id="RHEA-COMP:11604"/>
        <dbReference type="ChEBI" id="CHEBI:15377"/>
        <dbReference type="ChEBI" id="CHEBI:29999"/>
        <dbReference type="ChEBI" id="CHEBI:43474"/>
        <dbReference type="ChEBI" id="CHEBI:83421"/>
        <dbReference type="EC" id="3.1.3.16"/>
    </reaction>
</comment>
<comment type="catalytic activity">
    <reaction>
        <text>O-phospho-L-threonyl-[protein] + H2O = L-threonyl-[protein] + phosphate</text>
        <dbReference type="Rhea" id="RHEA:47004"/>
        <dbReference type="Rhea" id="RHEA-COMP:11060"/>
        <dbReference type="Rhea" id="RHEA-COMP:11605"/>
        <dbReference type="ChEBI" id="CHEBI:15377"/>
        <dbReference type="ChEBI" id="CHEBI:30013"/>
        <dbReference type="ChEBI" id="CHEBI:43474"/>
        <dbReference type="ChEBI" id="CHEBI:61977"/>
        <dbReference type="EC" id="3.1.3.16"/>
    </reaction>
</comment>
<comment type="cofactor">
    <cofactor evidence="1">
        <name>Mg(2+)</name>
        <dbReference type="ChEBI" id="CHEBI:18420"/>
    </cofactor>
    <cofactor evidence="1">
        <name>Mn(2+)</name>
        <dbReference type="ChEBI" id="CHEBI:29035"/>
    </cofactor>
    <text evidence="1">Binds 2 magnesium or manganese ions per subunit.</text>
</comment>
<comment type="subcellular location">
    <subcellularLocation>
        <location evidence="5">Membrane</location>
        <topology evidence="5">Multi-pass membrane protein</topology>
    </subcellularLocation>
</comment>
<comment type="similarity">
    <text evidence="5">In the C-terminal section; belongs to the PP2C family.</text>
</comment>
<evidence type="ECO:0000250" key="1"/>
<evidence type="ECO:0000255" key="2"/>
<evidence type="ECO:0000255" key="3">
    <source>
        <dbReference type="PROSITE-ProRule" id="PRU01082"/>
    </source>
</evidence>
<evidence type="ECO:0000256" key="4">
    <source>
        <dbReference type="SAM" id="MobiDB-lite"/>
    </source>
</evidence>
<evidence type="ECO:0000305" key="5"/>
<gene>
    <name type="ORF">DDB_G0282105</name>
</gene>
<protein>
    <recommendedName>
        <fullName>Probable protein phosphatase DDB_G0282105</fullName>
        <ecNumber>3.1.3.16</ecNumber>
    </recommendedName>
</protein>
<organism>
    <name type="scientific">Dictyostelium discoideum</name>
    <name type="common">Social amoeba</name>
    <dbReference type="NCBI Taxonomy" id="44689"/>
    <lineage>
        <taxon>Eukaryota</taxon>
        <taxon>Amoebozoa</taxon>
        <taxon>Evosea</taxon>
        <taxon>Eumycetozoa</taxon>
        <taxon>Dictyostelia</taxon>
        <taxon>Dictyosteliales</taxon>
        <taxon>Dictyosteliaceae</taxon>
        <taxon>Dictyostelium</taxon>
    </lineage>
</organism>
<proteinExistence type="inferred from homology"/>
<sequence>MVLMMDIKIMSAFSILFLSLMVSNEFLEFLANTVYAAILFIIILFFYQNRQHFFTTSSSSKDSLTSTTTTTTTTSITSSLIQQQQEKEQQQQLEQQQQQQSIKLITKEITIENDSEKNTSTTTSIITKEQSPGSVRLIQNYSASQQSELTNTTIKQLQQKNQELQEQINNQIEKSRKDQLKYFNSNNKSQSEIKEQIEKIIKLTEKNDDLLNSIVILNSTIDGNRIKMQEITKDRDSIYSSEQKLLSRLTAFEKKEKEYQDNEKQLQKKLSDQKDQYSTLKKEFDEKVKKSNKLENSIQSLESQIQKLLQKQEKEKQKLEKDKERERSSSFSSDISSSSTTSTTASTFLSSSPSKSIPIPIPIKTSNAISDLKRNNSNDSVNGLIGNGNSSVSPPSSSYLRESSDDSDNQSSSSPSEPKFKSLFNKVKSESSKIVNKAQKGINKHLGSDFFTPANTTTSTTTTTSTTSTSTTTPITSASATAAAISSSSIITSPTTNTTNDILSSSSSSSSSSSSLLTTNAILSPPVGNEQQMEVINDKTEVNQSPVKPLIFFDDLGNDKLLDSTTEEQIQSKMTISPRDKDRILIDKEQSLSDLFINSKENISNISVSNLDNFLKTNNNNNKNNIEESNNNNNNNNNNNNNNNNNNNNNNNNNKNDNKEVNSKLEFSIKDEENKIGLRRAKKKLSPGCSTMMEDVSIAIYPFLKEKKLSNCSNIGLFGVFDGHAGRGAADSASKLFPKEIEKLLESGNYSLTEQDDGGDNNHNQSKLLNDLFSNVDNKMKDHEYEGCTATLALIWSDGEEQQQQQQRYLQVGNVGDSSAFLCRGNESIELTFDHKANDPSEKQRIKDQGIPVSDNQTRINGVAVSRSLGNHFIKEQNIGMISTPHISNRYLLTPQDKFVIIASDGLWDVINGKDAIEKVSSLYDQGATADSMASCLLETAIQSSLCKDNVTVIIVKL</sequence>